<feature type="chain" id="PRO_1000133667" description="Beta-hexosaminidase">
    <location>
        <begin position="1"/>
        <end position="330"/>
    </location>
</feature>
<feature type="active site" description="Proton donor/acceptor" evidence="1">
    <location>
        <position position="173"/>
    </location>
</feature>
<feature type="active site" description="Nucleophile" evidence="1">
    <location>
        <position position="242"/>
    </location>
</feature>
<feature type="binding site" evidence="1">
    <location>
        <position position="62"/>
    </location>
    <ligand>
        <name>substrate</name>
    </ligand>
</feature>
<feature type="binding site" evidence="1">
    <location>
        <position position="70"/>
    </location>
    <ligand>
        <name>substrate</name>
    </ligand>
</feature>
<feature type="binding site" evidence="1">
    <location>
        <position position="130"/>
    </location>
    <ligand>
        <name>substrate</name>
    </ligand>
</feature>
<feature type="binding site" evidence="1">
    <location>
        <begin position="160"/>
        <end position="161"/>
    </location>
    <ligand>
        <name>substrate</name>
    </ligand>
</feature>
<feature type="site" description="Important for catalytic activity" evidence="1">
    <location>
        <position position="171"/>
    </location>
</feature>
<dbReference type="EC" id="3.2.1.52" evidence="1"/>
<dbReference type="EMBL" id="CP001233">
    <property type="protein sequence ID" value="ACP04973.1"/>
    <property type="molecule type" value="Genomic_DNA"/>
</dbReference>
<dbReference type="RefSeq" id="WP_000529115.1">
    <property type="nucleotide sequence ID" value="NC_012578.1"/>
</dbReference>
<dbReference type="SMR" id="C3LSU7"/>
<dbReference type="CAZy" id="GH3">
    <property type="family name" value="Glycoside Hydrolase Family 3"/>
</dbReference>
<dbReference type="KEGG" id="vcm:VCM66_0650"/>
<dbReference type="HOGENOM" id="CLU_008392_0_0_6"/>
<dbReference type="UniPathway" id="UPA00544"/>
<dbReference type="Proteomes" id="UP000001217">
    <property type="component" value="Chromosome I"/>
</dbReference>
<dbReference type="GO" id="GO:0005737">
    <property type="term" value="C:cytoplasm"/>
    <property type="evidence" value="ECO:0007669"/>
    <property type="project" value="UniProtKB-SubCell"/>
</dbReference>
<dbReference type="GO" id="GO:0004563">
    <property type="term" value="F:beta-N-acetylhexosaminidase activity"/>
    <property type="evidence" value="ECO:0007669"/>
    <property type="project" value="UniProtKB-UniRule"/>
</dbReference>
<dbReference type="GO" id="GO:0005975">
    <property type="term" value="P:carbohydrate metabolic process"/>
    <property type="evidence" value="ECO:0007669"/>
    <property type="project" value="InterPro"/>
</dbReference>
<dbReference type="GO" id="GO:0051301">
    <property type="term" value="P:cell division"/>
    <property type="evidence" value="ECO:0007669"/>
    <property type="project" value="UniProtKB-KW"/>
</dbReference>
<dbReference type="GO" id="GO:0071555">
    <property type="term" value="P:cell wall organization"/>
    <property type="evidence" value="ECO:0007669"/>
    <property type="project" value="UniProtKB-KW"/>
</dbReference>
<dbReference type="GO" id="GO:0009252">
    <property type="term" value="P:peptidoglycan biosynthetic process"/>
    <property type="evidence" value="ECO:0007669"/>
    <property type="project" value="UniProtKB-KW"/>
</dbReference>
<dbReference type="GO" id="GO:0009254">
    <property type="term" value="P:peptidoglycan turnover"/>
    <property type="evidence" value="ECO:0007669"/>
    <property type="project" value="UniProtKB-UniRule"/>
</dbReference>
<dbReference type="GO" id="GO:0008360">
    <property type="term" value="P:regulation of cell shape"/>
    <property type="evidence" value="ECO:0007669"/>
    <property type="project" value="UniProtKB-KW"/>
</dbReference>
<dbReference type="FunFam" id="3.20.20.300:FF:000001">
    <property type="entry name" value="Beta-hexosaminidase"/>
    <property type="match status" value="1"/>
</dbReference>
<dbReference type="Gene3D" id="3.20.20.300">
    <property type="entry name" value="Glycoside hydrolase, family 3, N-terminal domain"/>
    <property type="match status" value="1"/>
</dbReference>
<dbReference type="HAMAP" id="MF_00364">
    <property type="entry name" value="NagZ"/>
    <property type="match status" value="1"/>
</dbReference>
<dbReference type="InterPro" id="IPR022956">
    <property type="entry name" value="Beta_hexosaminidase_bac"/>
</dbReference>
<dbReference type="InterPro" id="IPR019800">
    <property type="entry name" value="Glyco_hydro_3_AS"/>
</dbReference>
<dbReference type="InterPro" id="IPR001764">
    <property type="entry name" value="Glyco_hydro_3_N"/>
</dbReference>
<dbReference type="InterPro" id="IPR036962">
    <property type="entry name" value="Glyco_hydro_3_N_sf"/>
</dbReference>
<dbReference type="InterPro" id="IPR017853">
    <property type="entry name" value="Glycoside_hydrolase_SF"/>
</dbReference>
<dbReference type="InterPro" id="IPR050226">
    <property type="entry name" value="NagZ_Beta-hexosaminidase"/>
</dbReference>
<dbReference type="NCBIfam" id="NF003740">
    <property type="entry name" value="PRK05337.1"/>
    <property type="match status" value="1"/>
</dbReference>
<dbReference type="PANTHER" id="PTHR30480:SF13">
    <property type="entry name" value="BETA-HEXOSAMINIDASE"/>
    <property type="match status" value="1"/>
</dbReference>
<dbReference type="PANTHER" id="PTHR30480">
    <property type="entry name" value="BETA-HEXOSAMINIDASE-RELATED"/>
    <property type="match status" value="1"/>
</dbReference>
<dbReference type="Pfam" id="PF00933">
    <property type="entry name" value="Glyco_hydro_3"/>
    <property type="match status" value="1"/>
</dbReference>
<dbReference type="SUPFAM" id="SSF51445">
    <property type="entry name" value="(Trans)glycosidases"/>
    <property type="match status" value="1"/>
</dbReference>
<dbReference type="PROSITE" id="PS00775">
    <property type="entry name" value="GLYCOSYL_HYDROL_F3"/>
    <property type="match status" value="1"/>
</dbReference>
<keyword id="KW-0131">Cell cycle</keyword>
<keyword id="KW-0132">Cell division</keyword>
<keyword id="KW-0133">Cell shape</keyword>
<keyword id="KW-0961">Cell wall biogenesis/degradation</keyword>
<keyword id="KW-0963">Cytoplasm</keyword>
<keyword id="KW-0326">Glycosidase</keyword>
<keyword id="KW-0378">Hydrolase</keyword>
<keyword id="KW-0573">Peptidoglycan synthesis</keyword>
<sequence>MGPLWLDVAGYELSAEDREILQHPTVGGVILFGRNYHDNQQLLALNKAIRQAAKRPILIGVDQEGGRVQRFREGFSRIPPAQYYARAENGVELAEQGGWLMAAELIAHDVDLSFAPVLDMGFACKAIGNRAFGEDVQTVLKHSSAFLRGMKAVGMATTGKHFPGHGAVIADSHLETPYDERETIAQDMAIFRAQIEAGVLDAMMPAHVVYPHYDAQPASGSSYWLKQVLREELGFKGIVFSDDLSMEGAAVMGGPVERSHQALVAGCDMILICNKREAAVEVLDNLPIMEVPQAEALLKKQQFSYSELKRLERWQQASANMQRLIEQFSE</sequence>
<reference key="1">
    <citation type="journal article" date="2008" name="PLoS ONE">
        <title>A recalibrated molecular clock and independent origins for the cholera pandemic clones.</title>
        <authorList>
            <person name="Feng L."/>
            <person name="Reeves P.R."/>
            <person name="Lan R."/>
            <person name="Ren Y."/>
            <person name="Gao C."/>
            <person name="Zhou Z."/>
            <person name="Ren Y."/>
            <person name="Cheng J."/>
            <person name="Wang W."/>
            <person name="Wang J."/>
            <person name="Qian W."/>
            <person name="Li D."/>
            <person name="Wang L."/>
        </authorList>
    </citation>
    <scope>NUCLEOTIDE SEQUENCE [LARGE SCALE GENOMIC DNA]</scope>
    <source>
        <strain>M66-2</strain>
    </source>
</reference>
<comment type="function">
    <text evidence="1">Plays a role in peptidoglycan recycling by cleaving the terminal beta-1,4-linked N-acetylglucosamine (GlcNAc) from peptide-linked peptidoglycan fragments, giving rise to free GlcNAc, anhydro-N-acetylmuramic acid and anhydro-N-acetylmuramic acid-linked peptides.</text>
</comment>
<comment type="catalytic activity">
    <reaction evidence="1">
        <text>Hydrolysis of terminal non-reducing N-acetyl-D-hexosamine residues in N-acetyl-beta-D-hexosaminides.</text>
        <dbReference type="EC" id="3.2.1.52"/>
    </reaction>
</comment>
<comment type="pathway">
    <text evidence="1">Cell wall biogenesis; peptidoglycan recycling.</text>
</comment>
<comment type="subcellular location">
    <subcellularLocation>
        <location evidence="1">Cytoplasm</location>
    </subcellularLocation>
</comment>
<comment type="similarity">
    <text evidence="1">Belongs to the glycosyl hydrolase 3 family. NagZ subfamily.</text>
</comment>
<protein>
    <recommendedName>
        <fullName evidence="1">Beta-hexosaminidase</fullName>
        <ecNumber evidence="1">3.2.1.52</ecNumber>
    </recommendedName>
    <alternativeName>
        <fullName evidence="1">Beta-N-acetylhexosaminidase</fullName>
    </alternativeName>
    <alternativeName>
        <fullName evidence="1">N-acetyl-beta-glucosaminidase</fullName>
    </alternativeName>
</protein>
<gene>
    <name evidence="1" type="primary">nagZ</name>
    <name type="ordered locus">VCM66_0650</name>
</gene>
<proteinExistence type="inferred from homology"/>
<name>NAGZ_VIBCM</name>
<organism>
    <name type="scientific">Vibrio cholerae serotype O1 (strain M66-2)</name>
    <dbReference type="NCBI Taxonomy" id="579112"/>
    <lineage>
        <taxon>Bacteria</taxon>
        <taxon>Pseudomonadati</taxon>
        <taxon>Pseudomonadota</taxon>
        <taxon>Gammaproteobacteria</taxon>
        <taxon>Vibrionales</taxon>
        <taxon>Vibrionaceae</taxon>
        <taxon>Vibrio</taxon>
    </lineage>
</organism>
<evidence type="ECO:0000255" key="1">
    <source>
        <dbReference type="HAMAP-Rule" id="MF_00364"/>
    </source>
</evidence>
<accession>C3LSU7</accession>